<feature type="chain" id="PRO_0000209822" description="DegV domain-containing protein XCC3382">
    <location>
        <begin position="1"/>
        <end position="314"/>
    </location>
</feature>
<feature type="domain" description="DegV" evidence="3">
    <location>
        <begin position="3"/>
        <end position="307"/>
    </location>
</feature>
<feature type="binding site" evidence="2">
    <location>
        <position position="63"/>
    </location>
    <ligand>
        <name>hexadecanoate</name>
        <dbReference type="ChEBI" id="CHEBI:7896"/>
    </ligand>
</feature>
<feature type="binding site" evidence="2">
    <location>
        <position position="96"/>
    </location>
    <ligand>
        <name>hexadecanoate</name>
        <dbReference type="ChEBI" id="CHEBI:7896"/>
    </ligand>
</feature>
<keyword id="KW-0446">Lipid-binding</keyword>
<keyword id="KW-1185">Reference proteome</keyword>
<gene>
    <name type="ordered locus">XCC3382</name>
</gene>
<accession>Q8P5F9</accession>
<name>Y3382_XANCP</name>
<comment type="function">
    <text evidence="1">May bind long-chain fatty acids, such as palmitate, and may play a role in lipid transport or fatty acid metabolism.</text>
</comment>
<protein>
    <recommendedName>
        <fullName>DegV domain-containing protein XCC3382</fullName>
    </recommendedName>
</protein>
<reference key="1">
    <citation type="journal article" date="2002" name="Nature">
        <title>Comparison of the genomes of two Xanthomonas pathogens with differing host specificities.</title>
        <authorList>
            <person name="da Silva A.C.R."/>
            <person name="Ferro J.A."/>
            <person name="Reinach F.C."/>
            <person name="Farah C.S."/>
            <person name="Furlan L.R."/>
            <person name="Quaggio R.B."/>
            <person name="Monteiro-Vitorello C.B."/>
            <person name="Van Sluys M.A."/>
            <person name="Almeida N.F. Jr."/>
            <person name="Alves L.M.C."/>
            <person name="do Amaral A.M."/>
            <person name="Bertolini M.C."/>
            <person name="Camargo L.E.A."/>
            <person name="Camarotte G."/>
            <person name="Cannavan F."/>
            <person name="Cardozo J."/>
            <person name="Chambergo F."/>
            <person name="Ciapina L.P."/>
            <person name="Cicarelli R.M.B."/>
            <person name="Coutinho L.L."/>
            <person name="Cursino-Santos J.R."/>
            <person name="El-Dorry H."/>
            <person name="Faria J.B."/>
            <person name="Ferreira A.J.S."/>
            <person name="Ferreira R.C.C."/>
            <person name="Ferro M.I.T."/>
            <person name="Formighieri E.F."/>
            <person name="Franco M.C."/>
            <person name="Greggio C.C."/>
            <person name="Gruber A."/>
            <person name="Katsuyama A.M."/>
            <person name="Kishi L.T."/>
            <person name="Leite R.P."/>
            <person name="Lemos E.G.M."/>
            <person name="Lemos M.V.F."/>
            <person name="Locali E.C."/>
            <person name="Machado M.A."/>
            <person name="Madeira A.M.B.N."/>
            <person name="Martinez-Rossi N.M."/>
            <person name="Martins E.C."/>
            <person name="Meidanis J."/>
            <person name="Menck C.F.M."/>
            <person name="Miyaki C.Y."/>
            <person name="Moon D.H."/>
            <person name="Moreira L.M."/>
            <person name="Novo M.T.M."/>
            <person name="Okura V.K."/>
            <person name="Oliveira M.C."/>
            <person name="Oliveira V.R."/>
            <person name="Pereira H.A."/>
            <person name="Rossi A."/>
            <person name="Sena J.A.D."/>
            <person name="Silva C."/>
            <person name="de Souza R.F."/>
            <person name="Spinola L.A.F."/>
            <person name="Takita M.A."/>
            <person name="Tamura R.E."/>
            <person name="Teixeira E.C."/>
            <person name="Tezza R.I.D."/>
            <person name="Trindade dos Santos M."/>
            <person name="Truffi D."/>
            <person name="Tsai S.M."/>
            <person name="White F.F."/>
            <person name="Setubal J.C."/>
            <person name="Kitajima J.P."/>
        </authorList>
    </citation>
    <scope>NUCLEOTIDE SEQUENCE [LARGE SCALE GENOMIC DNA]</scope>
    <source>
        <strain>ATCC 33913 / DSM 3586 / NCPPB 528 / LMG 568 / P 25</strain>
    </source>
</reference>
<sequence length="314" mass="34173">MRIGIVVDSACDLPQDFIQRNNVIVLPISVRIGEAVLADHRDEEATLSFLHAHVAERGHEAETTPFSVNQIRDLFLQRLVIDYDHVFCLTISKLRSQIFDNATQASFAILNDYKPVRQAAGHTSPFALRVIDTLNLFAGQGITAVEAVRLRAQGLGVAPIRARLEQLAEHTYGYMIPRDLYYLRARARTKGDRSVGLIGAALGSALDIKPVLRAYRGVTEPVAKLKGFEPSAEKLFAFTVRKLREGLMTPTVCVGYGGELAELHALPGYAALQAACQTQGVELFESVMSLTGMVNVGKGALAVAFAAEPHSFSA</sequence>
<dbReference type="EMBL" id="AE008922">
    <property type="protein sequence ID" value="AAM42652.1"/>
    <property type="molecule type" value="Genomic_DNA"/>
</dbReference>
<dbReference type="RefSeq" id="NP_638728.1">
    <property type="nucleotide sequence ID" value="NC_003902.1"/>
</dbReference>
<dbReference type="RefSeq" id="WP_011038480.1">
    <property type="nucleotide sequence ID" value="NC_003902.1"/>
</dbReference>
<dbReference type="SMR" id="Q8P5F9"/>
<dbReference type="STRING" id="190485.XCC3382"/>
<dbReference type="EnsemblBacteria" id="AAM42652">
    <property type="protein sequence ID" value="AAM42652"/>
    <property type="gene ID" value="XCC3382"/>
</dbReference>
<dbReference type="KEGG" id="xcc:XCC3382"/>
<dbReference type="PATRIC" id="fig|190485.4.peg.3617"/>
<dbReference type="eggNOG" id="COG1307">
    <property type="taxonomic scope" value="Bacteria"/>
</dbReference>
<dbReference type="HOGENOM" id="CLU_069606_0_0_6"/>
<dbReference type="OrthoDB" id="6190387at2"/>
<dbReference type="Proteomes" id="UP000001010">
    <property type="component" value="Chromosome"/>
</dbReference>
<dbReference type="GO" id="GO:0008289">
    <property type="term" value="F:lipid binding"/>
    <property type="evidence" value="ECO:0007669"/>
    <property type="project" value="UniProtKB-KW"/>
</dbReference>
<dbReference type="Gene3D" id="3.30.1180.10">
    <property type="match status" value="1"/>
</dbReference>
<dbReference type="Gene3D" id="3.40.50.10170">
    <property type="match status" value="1"/>
</dbReference>
<dbReference type="InterPro" id="IPR003797">
    <property type="entry name" value="DegV"/>
</dbReference>
<dbReference type="InterPro" id="IPR043168">
    <property type="entry name" value="DegV_C"/>
</dbReference>
<dbReference type="InterPro" id="IPR050270">
    <property type="entry name" value="DegV_domain_contain"/>
</dbReference>
<dbReference type="NCBIfam" id="TIGR00762">
    <property type="entry name" value="DegV"/>
    <property type="match status" value="1"/>
</dbReference>
<dbReference type="PANTHER" id="PTHR33434">
    <property type="entry name" value="DEGV DOMAIN-CONTAINING PROTEIN DR_1986-RELATED"/>
    <property type="match status" value="1"/>
</dbReference>
<dbReference type="PANTHER" id="PTHR33434:SF2">
    <property type="entry name" value="FATTY ACID-BINDING PROTEIN TM_1468"/>
    <property type="match status" value="1"/>
</dbReference>
<dbReference type="Pfam" id="PF02645">
    <property type="entry name" value="DegV"/>
    <property type="match status" value="1"/>
</dbReference>
<dbReference type="SUPFAM" id="SSF82549">
    <property type="entry name" value="DAK1/DegV-like"/>
    <property type="match status" value="1"/>
</dbReference>
<dbReference type="PROSITE" id="PS51482">
    <property type="entry name" value="DEGV"/>
    <property type="match status" value="1"/>
</dbReference>
<proteinExistence type="inferred from homology"/>
<organism>
    <name type="scientific">Xanthomonas campestris pv. campestris (strain ATCC 33913 / DSM 3586 / NCPPB 528 / LMG 568 / P 25)</name>
    <dbReference type="NCBI Taxonomy" id="190485"/>
    <lineage>
        <taxon>Bacteria</taxon>
        <taxon>Pseudomonadati</taxon>
        <taxon>Pseudomonadota</taxon>
        <taxon>Gammaproteobacteria</taxon>
        <taxon>Lysobacterales</taxon>
        <taxon>Lysobacteraceae</taxon>
        <taxon>Xanthomonas</taxon>
    </lineage>
</organism>
<evidence type="ECO:0000250" key="1"/>
<evidence type="ECO:0000250" key="2">
    <source>
        <dbReference type="UniProtKB" id="Q9X1H9"/>
    </source>
</evidence>
<evidence type="ECO:0000255" key="3">
    <source>
        <dbReference type="PROSITE-ProRule" id="PRU00815"/>
    </source>
</evidence>